<sequence length="143" mass="15846">MNPVRRRKLFILLFALTILSAAAALVLYALRQNISLFYTPTQIVAGEAPVKHHIRVGGMVEANSIVRAKKGLDVQFKITDFENTIVVTYSGILPDLFREGQGIVAEGEVTDNHHFHAIQVLAKHDANYMPPQVKSALADKVKQ</sequence>
<accession>A5IG55</accession>
<keyword id="KW-0997">Cell inner membrane</keyword>
<keyword id="KW-1003">Cell membrane</keyword>
<keyword id="KW-0201">Cytochrome c-type biogenesis</keyword>
<keyword id="KW-0349">Heme</keyword>
<keyword id="KW-0408">Iron</keyword>
<keyword id="KW-0472">Membrane</keyword>
<keyword id="KW-0479">Metal-binding</keyword>
<keyword id="KW-0735">Signal-anchor</keyword>
<keyword id="KW-0812">Transmembrane</keyword>
<keyword id="KW-1133">Transmembrane helix</keyword>
<evidence type="ECO:0000255" key="1">
    <source>
        <dbReference type="HAMAP-Rule" id="MF_01959"/>
    </source>
</evidence>
<name>CCME_LEGPC</name>
<proteinExistence type="inferred from homology"/>
<reference key="1">
    <citation type="submission" date="2006-11" db="EMBL/GenBank/DDBJ databases">
        <title>Identification and characterization of a new conjugation/ type IVA secretion system (trb/tra) of L. pneumophila Corby localized on a mobile genomic island.</title>
        <authorList>
            <person name="Gloeckner G."/>
            <person name="Albert-Weissenberger C."/>
            <person name="Weinmann E."/>
            <person name="Jacobi S."/>
            <person name="Schunder E."/>
            <person name="Steinert M."/>
            <person name="Buchrieser C."/>
            <person name="Hacker J."/>
            <person name="Heuner K."/>
        </authorList>
    </citation>
    <scope>NUCLEOTIDE SEQUENCE [LARGE SCALE GENOMIC DNA]</scope>
    <source>
        <strain>Corby</strain>
    </source>
</reference>
<dbReference type="EMBL" id="CP000675">
    <property type="protein sequence ID" value="ABQ56355.1"/>
    <property type="molecule type" value="Genomic_DNA"/>
</dbReference>
<dbReference type="RefSeq" id="WP_011945970.1">
    <property type="nucleotide sequence ID" value="NZ_JAPMSS010000002.1"/>
</dbReference>
<dbReference type="SMR" id="A5IG55"/>
<dbReference type="KEGG" id="lpc:LPC_2435"/>
<dbReference type="HOGENOM" id="CLU_079503_1_1_6"/>
<dbReference type="GO" id="GO:0005886">
    <property type="term" value="C:plasma membrane"/>
    <property type="evidence" value="ECO:0007669"/>
    <property type="project" value="UniProtKB-SubCell"/>
</dbReference>
<dbReference type="GO" id="GO:0020037">
    <property type="term" value="F:heme binding"/>
    <property type="evidence" value="ECO:0007669"/>
    <property type="project" value="InterPro"/>
</dbReference>
<dbReference type="GO" id="GO:0046872">
    <property type="term" value="F:metal ion binding"/>
    <property type="evidence" value="ECO:0007669"/>
    <property type="project" value="UniProtKB-KW"/>
</dbReference>
<dbReference type="GO" id="GO:0017004">
    <property type="term" value="P:cytochrome complex assembly"/>
    <property type="evidence" value="ECO:0007669"/>
    <property type="project" value="UniProtKB-KW"/>
</dbReference>
<dbReference type="FunFam" id="2.40.50.140:FF:000104">
    <property type="entry name" value="Cytochrome c-type biogenesis protein CcmE"/>
    <property type="match status" value="1"/>
</dbReference>
<dbReference type="Gene3D" id="2.40.50.140">
    <property type="entry name" value="Nucleic acid-binding proteins"/>
    <property type="match status" value="1"/>
</dbReference>
<dbReference type="HAMAP" id="MF_01959">
    <property type="entry name" value="CcmE"/>
    <property type="match status" value="1"/>
</dbReference>
<dbReference type="InterPro" id="IPR004329">
    <property type="entry name" value="CcmE"/>
</dbReference>
<dbReference type="InterPro" id="IPR036127">
    <property type="entry name" value="CcmE-like_sf"/>
</dbReference>
<dbReference type="InterPro" id="IPR012340">
    <property type="entry name" value="NA-bd_OB-fold"/>
</dbReference>
<dbReference type="NCBIfam" id="NF009727">
    <property type="entry name" value="PRK13254.1-1"/>
    <property type="match status" value="1"/>
</dbReference>
<dbReference type="NCBIfam" id="NF009729">
    <property type="entry name" value="PRK13254.1-3"/>
    <property type="match status" value="1"/>
</dbReference>
<dbReference type="NCBIfam" id="NF009731">
    <property type="entry name" value="PRK13254.1-5"/>
    <property type="match status" value="1"/>
</dbReference>
<dbReference type="PANTHER" id="PTHR34128">
    <property type="entry name" value="CYTOCHROME C-TYPE BIOGENESIS PROTEIN CCME HOMOLOG, MITOCHONDRIAL"/>
    <property type="match status" value="1"/>
</dbReference>
<dbReference type="PANTHER" id="PTHR34128:SF2">
    <property type="entry name" value="CYTOCHROME C-TYPE BIOGENESIS PROTEIN CCME HOMOLOG, MITOCHONDRIAL"/>
    <property type="match status" value="1"/>
</dbReference>
<dbReference type="Pfam" id="PF03100">
    <property type="entry name" value="CcmE"/>
    <property type="match status" value="1"/>
</dbReference>
<dbReference type="SUPFAM" id="SSF82093">
    <property type="entry name" value="Heme chaperone CcmE"/>
    <property type="match status" value="1"/>
</dbReference>
<feature type="chain" id="PRO_1000070821" description="Cytochrome c-type biogenesis protein CcmE">
    <location>
        <begin position="1"/>
        <end position="143"/>
    </location>
</feature>
<feature type="topological domain" description="Cytoplasmic" evidence="1">
    <location>
        <begin position="1"/>
        <end position="8"/>
    </location>
</feature>
<feature type="transmembrane region" description="Helical; Signal-anchor for type II membrane protein" evidence="1">
    <location>
        <begin position="9"/>
        <end position="29"/>
    </location>
</feature>
<feature type="topological domain" description="Periplasmic" evidence="1">
    <location>
        <begin position="30"/>
        <end position="143"/>
    </location>
</feature>
<feature type="binding site" description="covalent" evidence="1">
    <location>
        <position position="124"/>
    </location>
    <ligand>
        <name>heme</name>
        <dbReference type="ChEBI" id="CHEBI:30413"/>
    </ligand>
</feature>
<feature type="binding site" description="axial binding residue" evidence="1">
    <location>
        <position position="128"/>
    </location>
    <ligand>
        <name>heme</name>
        <dbReference type="ChEBI" id="CHEBI:30413"/>
    </ligand>
    <ligandPart>
        <name>Fe</name>
        <dbReference type="ChEBI" id="CHEBI:18248"/>
    </ligandPart>
</feature>
<organism>
    <name type="scientific">Legionella pneumophila (strain Corby)</name>
    <dbReference type="NCBI Taxonomy" id="400673"/>
    <lineage>
        <taxon>Bacteria</taxon>
        <taxon>Pseudomonadati</taxon>
        <taxon>Pseudomonadota</taxon>
        <taxon>Gammaproteobacteria</taxon>
        <taxon>Legionellales</taxon>
        <taxon>Legionellaceae</taxon>
        <taxon>Legionella</taxon>
    </lineage>
</organism>
<protein>
    <recommendedName>
        <fullName evidence="1">Cytochrome c-type biogenesis protein CcmE</fullName>
    </recommendedName>
    <alternativeName>
        <fullName evidence="1">Cytochrome c maturation protein E</fullName>
    </alternativeName>
    <alternativeName>
        <fullName evidence="1">Heme chaperone CcmE</fullName>
    </alternativeName>
</protein>
<gene>
    <name evidence="1" type="primary">ccmE</name>
    <name evidence="1" type="synonym">cycJ</name>
    <name type="ordered locus">LPC_2435</name>
</gene>
<comment type="function">
    <text evidence="1">Heme chaperone required for the biogenesis of c-type cytochromes. Transiently binds heme delivered by CcmC and transfers the heme to apo-cytochromes in a process facilitated by CcmF and CcmH.</text>
</comment>
<comment type="subcellular location">
    <subcellularLocation>
        <location evidence="1">Cell inner membrane</location>
        <topology evidence="1">Single-pass type II membrane protein</topology>
        <orientation evidence="1">Periplasmic side</orientation>
    </subcellularLocation>
</comment>
<comment type="similarity">
    <text evidence="1">Belongs to the CcmE/CycJ family.</text>
</comment>